<name>TDCC_SALPB</name>
<accession>A9N628</accession>
<reference key="1">
    <citation type="submission" date="2007-11" db="EMBL/GenBank/DDBJ databases">
        <authorList>
            <consortium name="The Salmonella enterica serovar Paratyphi B Genome Sequencing Project"/>
            <person name="McClelland M."/>
            <person name="Sanderson E.K."/>
            <person name="Porwollik S."/>
            <person name="Spieth J."/>
            <person name="Clifton W.S."/>
            <person name="Fulton R."/>
            <person name="Cordes M."/>
            <person name="Wollam A."/>
            <person name="Shah N."/>
            <person name="Pepin K."/>
            <person name="Bhonagiri V."/>
            <person name="Nash W."/>
            <person name="Johnson M."/>
            <person name="Thiruvilangam P."/>
            <person name="Wilson R."/>
        </authorList>
    </citation>
    <scope>NUCLEOTIDE SEQUENCE [LARGE SCALE GENOMIC DNA]</scope>
    <source>
        <strain>ATCC BAA-1250 / SPB7</strain>
    </source>
</reference>
<organism>
    <name type="scientific">Salmonella paratyphi B (strain ATCC BAA-1250 / SPB7)</name>
    <dbReference type="NCBI Taxonomy" id="1016998"/>
    <lineage>
        <taxon>Bacteria</taxon>
        <taxon>Pseudomonadati</taxon>
        <taxon>Pseudomonadota</taxon>
        <taxon>Gammaproteobacteria</taxon>
        <taxon>Enterobacterales</taxon>
        <taxon>Enterobacteriaceae</taxon>
        <taxon>Salmonella</taxon>
    </lineage>
</organism>
<dbReference type="EMBL" id="CP000886">
    <property type="protein sequence ID" value="ABX69374.1"/>
    <property type="molecule type" value="Genomic_DNA"/>
</dbReference>
<dbReference type="RefSeq" id="WP_000108130.1">
    <property type="nucleotide sequence ID" value="NC_010102.1"/>
</dbReference>
<dbReference type="KEGG" id="spq:SPAB_04046"/>
<dbReference type="PATRIC" id="fig|1016998.12.peg.3813"/>
<dbReference type="HOGENOM" id="CLU_052043_1_1_6"/>
<dbReference type="BioCyc" id="SENT1016998:SPAB_RS16435-MONOMER"/>
<dbReference type="Proteomes" id="UP000008556">
    <property type="component" value="Chromosome"/>
</dbReference>
<dbReference type="GO" id="GO:0005886">
    <property type="term" value="C:plasma membrane"/>
    <property type="evidence" value="ECO:0007669"/>
    <property type="project" value="UniProtKB-SubCell"/>
</dbReference>
<dbReference type="GO" id="GO:0015194">
    <property type="term" value="F:L-serine transmembrane transporter activity"/>
    <property type="evidence" value="ECO:0007669"/>
    <property type="project" value="InterPro"/>
</dbReference>
<dbReference type="GO" id="GO:0015293">
    <property type="term" value="F:symporter activity"/>
    <property type="evidence" value="ECO:0007669"/>
    <property type="project" value="UniProtKB-UniRule"/>
</dbReference>
<dbReference type="GO" id="GO:0015565">
    <property type="term" value="F:threonine efflux transmembrane transporter activity"/>
    <property type="evidence" value="ECO:0007669"/>
    <property type="project" value="InterPro"/>
</dbReference>
<dbReference type="Gene3D" id="1.20.1740.10">
    <property type="entry name" value="Amino acid/polyamine transporter I"/>
    <property type="match status" value="1"/>
</dbReference>
<dbReference type="HAMAP" id="MF_01583">
    <property type="entry name" value="Thr_Ser_transp_TdcC"/>
    <property type="match status" value="1"/>
</dbReference>
<dbReference type="InterPro" id="IPR018227">
    <property type="entry name" value="Amino_acid_transport_2"/>
</dbReference>
<dbReference type="InterPro" id="IPR004694">
    <property type="entry name" value="Hydroxy_aa_transpt"/>
</dbReference>
<dbReference type="InterPro" id="IPR023726">
    <property type="entry name" value="Thr/Ser_transpt_TdcC"/>
</dbReference>
<dbReference type="NCBIfam" id="NF010152">
    <property type="entry name" value="PRK13629.1"/>
    <property type="match status" value="1"/>
</dbReference>
<dbReference type="NCBIfam" id="TIGR00814">
    <property type="entry name" value="stp"/>
    <property type="match status" value="1"/>
</dbReference>
<dbReference type="PANTHER" id="PTHR35334">
    <property type="entry name" value="SERINE TRANSPORTER"/>
    <property type="match status" value="1"/>
</dbReference>
<dbReference type="PANTHER" id="PTHR35334:SF1">
    <property type="entry name" value="THREONINE_SERINE TRANSPORTER TDCC"/>
    <property type="match status" value="1"/>
</dbReference>
<dbReference type="Pfam" id="PF03222">
    <property type="entry name" value="Trp_Tyr_perm"/>
    <property type="match status" value="1"/>
</dbReference>
<comment type="function">
    <text evidence="1">Involved in the import of threonine and serine into the cell, with the concomitant import of a proton (symport system).</text>
</comment>
<comment type="catalytic activity">
    <reaction evidence="1">
        <text>L-threonine(in) + H(+)(in) = L-threonine(out) + H(+)(out)</text>
        <dbReference type="Rhea" id="RHEA:28883"/>
        <dbReference type="ChEBI" id="CHEBI:15378"/>
        <dbReference type="ChEBI" id="CHEBI:57926"/>
    </reaction>
    <physiologicalReaction direction="right-to-left" evidence="1">
        <dbReference type="Rhea" id="RHEA:28885"/>
    </physiologicalReaction>
</comment>
<comment type="catalytic activity">
    <reaction evidence="1">
        <text>L-serine(in) + H(+)(in) = L-serine(out) + H(+)(out)</text>
        <dbReference type="Rhea" id="RHEA:28887"/>
        <dbReference type="ChEBI" id="CHEBI:15378"/>
        <dbReference type="ChEBI" id="CHEBI:33384"/>
    </reaction>
    <physiologicalReaction direction="right-to-left" evidence="1">
        <dbReference type="Rhea" id="RHEA:28889"/>
    </physiologicalReaction>
</comment>
<comment type="subcellular location">
    <subcellularLocation>
        <location evidence="1">Cell inner membrane</location>
        <topology evidence="1">Multi-pass membrane protein</topology>
    </subcellularLocation>
</comment>
<comment type="similarity">
    <text evidence="1">Belongs to the amino acid/polyamine transporter 2 family. SdaC/TdcC subfamily.</text>
</comment>
<sequence>MSTTDSIVSSQAKQSSWRKSDTTWTLGLFGTAIGAGVLFFPIRAGFGGLIPILLMLVLAYPIAFYCHRALARLCLSGSNPSGNITETVEEHFGKTGGVVITFLYFFAICPLLWIYGVTITNTFMTFWENQLQMPALNRGFVALFLLLLMAFVIWFGKDLMVKVMSYLVWPFIASLVLISLSLIPYWNSAVIDQVDLSNIALTGHDGILVTVWLGISIMVFSFNFSPIVSSFVVSKREEYEKEFGREFTERKCSQIISRASMLMVAVVMFFAFSCLFTLSPQNMADAKAQNIPVLSYLANHFASLSGTKSTFATVLEYGASIIALVAIFKSFFGHYLGTLEGLNGLVMKFGYKGDKTKVSMGKLNTISMIFIMGSTWVVAYANPNILDLIEAMGAPIIASLLCLLPMYAIRKAPSLAKYRGRLDNVFVTLIGLLTILNIVYKLF</sequence>
<proteinExistence type="inferred from homology"/>
<evidence type="ECO:0000255" key="1">
    <source>
        <dbReference type="HAMAP-Rule" id="MF_01583"/>
    </source>
</evidence>
<keyword id="KW-0029">Amino-acid transport</keyword>
<keyword id="KW-0997">Cell inner membrane</keyword>
<keyword id="KW-1003">Cell membrane</keyword>
<keyword id="KW-0472">Membrane</keyword>
<keyword id="KW-0769">Symport</keyword>
<keyword id="KW-0812">Transmembrane</keyword>
<keyword id="KW-1133">Transmembrane helix</keyword>
<keyword id="KW-0813">Transport</keyword>
<protein>
    <recommendedName>
        <fullName evidence="1">Threonine/serine transporter TdcC</fullName>
    </recommendedName>
    <alternativeName>
        <fullName evidence="1">H(+)/threonine-serine symporter</fullName>
    </alternativeName>
</protein>
<gene>
    <name evidence="1" type="primary">tdcC</name>
    <name type="ordered locus">SPAB_04046</name>
</gene>
<feature type="chain" id="PRO_1000087943" description="Threonine/serine transporter TdcC">
    <location>
        <begin position="1"/>
        <end position="443"/>
    </location>
</feature>
<feature type="transmembrane region" description="Helical" evidence="1">
    <location>
        <begin position="22"/>
        <end position="42"/>
    </location>
</feature>
<feature type="transmembrane region" description="Helical" evidence="1">
    <location>
        <begin position="44"/>
        <end position="64"/>
    </location>
</feature>
<feature type="transmembrane region" description="Helical" evidence="1">
    <location>
        <begin position="97"/>
        <end position="117"/>
    </location>
</feature>
<feature type="transmembrane region" description="Helical" evidence="1">
    <location>
        <begin position="140"/>
        <end position="160"/>
    </location>
</feature>
<feature type="transmembrane region" description="Helical" evidence="1">
    <location>
        <begin position="163"/>
        <end position="183"/>
    </location>
</feature>
<feature type="transmembrane region" description="Helical" evidence="1">
    <location>
        <begin position="207"/>
        <end position="227"/>
    </location>
</feature>
<feature type="transmembrane region" description="Helical" evidence="1">
    <location>
        <begin position="259"/>
        <end position="279"/>
    </location>
</feature>
<feature type="transmembrane region" description="Helical" evidence="1">
    <location>
        <begin position="319"/>
        <end position="339"/>
    </location>
</feature>
<feature type="transmembrane region" description="Helical" evidence="1">
    <location>
        <begin position="366"/>
        <end position="386"/>
    </location>
</feature>
<feature type="transmembrane region" description="Helical" evidence="1">
    <location>
        <begin position="389"/>
        <end position="409"/>
    </location>
</feature>
<feature type="transmembrane region" description="Helical" evidence="1">
    <location>
        <begin position="423"/>
        <end position="443"/>
    </location>
</feature>